<dbReference type="EMBL" id="CP000611">
    <property type="protein sequence ID" value="ABQ72451.1"/>
    <property type="molecule type" value="Genomic_DNA"/>
</dbReference>
<dbReference type="RefSeq" id="WP_003403654.1">
    <property type="nucleotide sequence ID" value="NZ_CP016972.1"/>
</dbReference>
<dbReference type="PDB" id="7F0D">
    <property type="method" value="EM"/>
    <property type="resolution" value="3.30 A"/>
    <property type="chains" value="U=1-105"/>
</dbReference>
<dbReference type="PDBsum" id="7F0D"/>
<dbReference type="SMR" id="A5U0A1"/>
<dbReference type="GeneID" id="45424680"/>
<dbReference type="KEGG" id="mra:MRA_0723"/>
<dbReference type="eggNOG" id="COG0198">
    <property type="taxonomic scope" value="Bacteria"/>
</dbReference>
<dbReference type="HOGENOM" id="CLU_093315_2_0_11"/>
<dbReference type="Proteomes" id="UP000001988">
    <property type="component" value="Chromosome"/>
</dbReference>
<dbReference type="GO" id="GO:1990904">
    <property type="term" value="C:ribonucleoprotein complex"/>
    <property type="evidence" value="ECO:0007669"/>
    <property type="project" value="UniProtKB-KW"/>
</dbReference>
<dbReference type="GO" id="GO:0005840">
    <property type="term" value="C:ribosome"/>
    <property type="evidence" value="ECO:0007669"/>
    <property type="project" value="UniProtKB-KW"/>
</dbReference>
<dbReference type="GO" id="GO:0019843">
    <property type="term" value="F:rRNA binding"/>
    <property type="evidence" value="ECO:0007669"/>
    <property type="project" value="UniProtKB-UniRule"/>
</dbReference>
<dbReference type="GO" id="GO:0003735">
    <property type="term" value="F:structural constituent of ribosome"/>
    <property type="evidence" value="ECO:0007669"/>
    <property type="project" value="InterPro"/>
</dbReference>
<dbReference type="GO" id="GO:0006412">
    <property type="term" value="P:translation"/>
    <property type="evidence" value="ECO:0007669"/>
    <property type="project" value="UniProtKB-UniRule"/>
</dbReference>
<dbReference type="CDD" id="cd06089">
    <property type="entry name" value="KOW_RPL26"/>
    <property type="match status" value="1"/>
</dbReference>
<dbReference type="FunFam" id="2.30.30.30:FF:000004">
    <property type="entry name" value="50S ribosomal protein L24"/>
    <property type="match status" value="1"/>
</dbReference>
<dbReference type="Gene3D" id="2.30.30.30">
    <property type="match status" value="1"/>
</dbReference>
<dbReference type="HAMAP" id="MF_01326_B">
    <property type="entry name" value="Ribosomal_uL24_B"/>
    <property type="match status" value="1"/>
</dbReference>
<dbReference type="InterPro" id="IPR005824">
    <property type="entry name" value="KOW"/>
</dbReference>
<dbReference type="InterPro" id="IPR014722">
    <property type="entry name" value="Rib_uL2_dom2"/>
</dbReference>
<dbReference type="InterPro" id="IPR003256">
    <property type="entry name" value="Ribosomal_uL24"/>
</dbReference>
<dbReference type="InterPro" id="IPR005825">
    <property type="entry name" value="Ribosomal_uL24_CS"/>
</dbReference>
<dbReference type="InterPro" id="IPR041988">
    <property type="entry name" value="Ribosomal_uL24_KOW"/>
</dbReference>
<dbReference type="InterPro" id="IPR008991">
    <property type="entry name" value="Translation_prot_SH3-like_sf"/>
</dbReference>
<dbReference type="NCBIfam" id="TIGR01079">
    <property type="entry name" value="rplX_bact"/>
    <property type="match status" value="1"/>
</dbReference>
<dbReference type="PANTHER" id="PTHR12903">
    <property type="entry name" value="MITOCHONDRIAL RIBOSOMAL PROTEIN L24"/>
    <property type="match status" value="1"/>
</dbReference>
<dbReference type="Pfam" id="PF00467">
    <property type="entry name" value="KOW"/>
    <property type="match status" value="1"/>
</dbReference>
<dbReference type="Pfam" id="PF17136">
    <property type="entry name" value="ribosomal_L24"/>
    <property type="match status" value="1"/>
</dbReference>
<dbReference type="SMART" id="SM00739">
    <property type="entry name" value="KOW"/>
    <property type="match status" value="1"/>
</dbReference>
<dbReference type="SUPFAM" id="SSF50104">
    <property type="entry name" value="Translation proteins SH3-like domain"/>
    <property type="match status" value="1"/>
</dbReference>
<dbReference type="PROSITE" id="PS01108">
    <property type="entry name" value="RIBOSOMAL_L24"/>
    <property type="match status" value="1"/>
</dbReference>
<feature type="chain" id="PRO_1000052263" description="Large ribosomal subunit protein uL24">
    <location>
        <begin position="1"/>
        <end position="105"/>
    </location>
</feature>
<feature type="strand" evidence="3">
    <location>
        <begin position="8"/>
        <end position="11"/>
    </location>
</feature>
<feature type="turn" evidence="3">
    <location>
        <begin position="15"/>
        <end position="18"/>
    </location>
</feature>
<feature type="strand" evidence="3">
    <location>
        <begin position="20"/>
        <end position="27"/>
    </location>
</feature>
<feature type="turn" evidence="3">
    <location>
        <begin position="28"/>
        <end position="31"/>
    </location>
</feature>
<feature type="strand" evidence="3">
    <location>
        <begin position="32"/>
        <end position="35"/>
    </location>
</feature>
<feature type="strand" evidence="3">
    <location>
        <begin position="66"/>
        <end position="68"/>
    </location>
</feature>
<feature type="strand" evidence="3">
    <location>
        <begin position="71"/>
        <end position="74"/>
    </location>
</feature>
<feature type="strand" evidence="3">
    <location>
        <begin position="76"/>
        <end position="80"/>
    </location>
</feature>
<feature type="helix" evidence="3">
    <location>
        <begin position="89"/>
        <end position="91"/>
    </location>
</feature>
<feature type="strand" evidence="3">
    <location>
        <begin position="98"/>
        <end position="101"/>
    </location>
</feature>
<proteinExistence type="evidence at protein level"/>
<sequence>MKVHKGDTVLVISGKDKGAKGKVLQAYPDRNRVLVEGVNRIKKHTAISTTQRGARSGGIVTQEAPIHVSNVMVVDSDGKPTRIGYRVDEETGKRVRISKRNGKDI</sequence>
<protein>
    <recommendedName>
        <fullName evidence="1">Large ribosomal subunit protein uL24</fullName>
    </recommendedName>
    <alternativeName>
        <fullName evidence="2">50S ribosomal protein L24</fullName>
    </alternativeName>
</protein>
<comment type="function">
    <text evidence="1">One of two assembly initiator proteins, it binds directly to the 5'-end of the 23S rRNA, where it nucleates assembly of the 50S subunit.</text>
</comment>
<comment type="function">
    <text evidence="1">One of the proteins that surrounds the polypeptide exit tunnel on the outside of the subunit.</text>
</comment>
<comment type="subunit">
    <text evidence="1">Part of the 50S ribosomal subunit.</text>
</comment>
<comment type="similarity">
    <text evidence="1">Belongs to the universal ribosomal protein uL24 family.</text>
</comment>
<accession>A5U0A1</accession>
<name>RL24_MYCTA</name>
<evidence type="ECO:0000255" key="1">
    <source>
        <dbReference type="HAMAP-Rule" id="MF_01326"/>
    </source>
</evidence>
<evidence type="ECO:0000305" key="2"/>
<evidence type="ECO:0007829" key="3">
    <source>
        <dbReference type="PDB" id="7F0D"/>
    </source>
</evidence>
<reference key="1">
    <citation type="journal article" date="2008" name="PLoS ONE">
        <title>Genetic basis of virulence attenuation revealed by comparative genomic analysis of Mycobacterium tuberculosis strain H37Ra versus H37Rv.</title>
        <authorList>
            <person name="Zheng H."/>
            <person name="Lu L."/>
            <person name="Wang B."/>
            <person name="Pu S."/>
            <person name="Zhang X."/>
            <person name="Zhu G."/>
            <person name="Shi W."/>
            <person name="Zhang L."/>
            <person name="Wang H."/>
            <person name="Wang S."/>
            <person name="Zhao G."/>
            <person name="Zhang Y."/>
        </authorList>
    </citation>
    <scope>NUCLEOTIDE SEQUENCE [LARGE SCALE GENOMIC DNA]</scope>
    <source>
        <strain>ATCC 25177 / H37Ra</strain>
    </source>
</reference>
<organism>
    <name type="scientific">Mycobacterium tuberculosis (strain ATCC 25177 / H37Ra)</name>
    <dbReference type="NCBI Taxonomy" id="419947"/>
    <lineage>
        <taxon>Bacteria</taxon>
        <taxon>Bacillati</taxon>
        <taxon>Actinomycetota</taxon>
        <taxon>Actinomycetes</taxon>
        <taxon>Mycobacteriales</taxon>
        <taxon>Mycobacteriaceae</taxon>
        <taxon>Mycobacterium</taxon>
        <taxon>Mycobacterium tuberculosis complex</taxon>
    </lineage>
</organism>
<keyword id="KW-0002">3D-structure</keyword>
<keyword id="KW-1185">Reference proteome</keyword>
<keyword id="KW-0687">Ribonucleoprotein</keyword>
<keyword id="KW-0689">Ribosomal protein</keyword>
<keyword id="KW-0694">RNA-binding</keyword>
<keyword id="KW-0699">rRNA-binding</keyword>
<gene>
    <name evidence="1" type="primary">rplX</name>
    <name type="ordered locus">MRA_0723</name>
</gene>